<proteinExistence type="inferred from homology"/>
<sequence>MEFREQVLNLLAEVAENDIVKENPDVEIFEEGIIDSFQTVGLLLEIQNKLDIEVSIMDFDRDEWATPNKIVEALEELR</sequence>
<protein>
    <recommendedName>
        <fullName evidence="1">D-alanyl carrier protein</fullName>
        <shortName evidence="1">DCP</shortName>
    </recommendedName>
    <alternativeName>
        <fullName evidence="1">D-alanine--poly(phosphoribitol) ligase subunit 2</fullName>
    </alternativeName>
</protein>
<comment type="function">
    <text evidence="1">Carrier protein involved in the D-alanylation of lipoteichoic acid (LTA). The loading of thioester-linked D-alanine onto DltC is catalyzed by D-alanine--D-alanyl carrier protein ligase DltA. The DltC-carried D-alanyl group is further transferred to cell membrane phosphatidylglycerol (PG) by forming an ester bond, probably catalyzed by DltD. D-alanylation of LTA plays an important role in modulating the properties of the cell wall in Gram-positive bacteria, influencing the net charge of the cell wall.</text>
</comment>
<comment type="pathway">
    <text evidence="1">Cell wall biogenesis; lipoteichoic acid biosynthesis.</text>
</comment>
<comment type="subcellular location">
    <subcellularLocation>
        <location evidence="1">Cytoplasm</location>
    </subcellularLocation>
</comment>
<comment type="PTM">
    <text evidence="1">4'-phosphopantetheine is transferred from CoA to a specific serine of apo-DCP.</text>
</comment>
<comment type="similarity">
    <text evidence="1">Belongs to the DltC family.</text>
</comment>
<keyword id="KW-0961">Cell wall biogenesis/degradation</keyword>
<keyword id="KW-0963">Cytoplasm</keyword>
<keyword id="KW-0596">Phosphopantetheine</keyword>
<keyword id="KW-0597">Phosphoprotein</keyword>
<feature type="chain" id="PRO_1000082309" description="D-alanyl carrier protein">
    <location>
        <begin position="1"/>
        <end position="78"/>
    </location>
</feature>
<feature type="domain" description="Carrier" evidence="1">
    <location>
        <begin position="1"/>
        <end position="78"/>
    </location>
</feature>
<feature type="modified residue" description="O-(pantetheine 4'-phosphoryl)serine" evidence="1">
    <location>
        <position position="36"/>
    </location>
</feature>
<accession>A8Z1J3</accession>
<organism>
    <name type="scientific">Staphylococcus aureus (strain USA300 / TCH1516)</name>
    <dbReference type="NCBI Taxonomy" id="451516"/>
    <lineage>
        <taxon>Bacteria</taxon>
        <taxon>Bacillati</taxon>
        <taxon>Bacillota</taxon>
        <taxon>Bacilli</taxon>
        <taxon>Bacillales</taxon>
        <taxon>Staphylococcaceae</taxon>
        <taxon>Staphylococcus</taxon>
    </lineage>
</organism>
<name>DLTC_STAAT</name>
<evidence type="ECO:0000255" key="1">
    <source>
        <dbReference type="HAMAP-Rule" id="MF_00565"/>
    </source>
</evidence>
<gene>
    <name evidence="1" type="primary">dltC</name>
    <name type="ordered locus">USA300HOU_0895</name>
</gene>
<dbReference type="EMBL" id="CP000730">
    <property type="protein sequence ID" value="ABX28916.1"/>
    <property type="molecule type" value="Genomic_DNA"/>
</dbReference>
<dbReference type="RefSeq" id="WP_000395692.1">
    <property type="nucleotide sequence ID" value="NC_010079.1"/>
</dbReference>
<dbReference type="SMR" id="A8Z1J3"/>
<dbReference type="GeneID" id="98345253"/>
<dbReference type="KEGG" id="sax:USA300HOU_0895"/>
<dbReference type="HOGENOM" id="CLU_108696_19_0_9"/>
<dbReference type="UniPathway" id="UPA00556"/>
<dbReference type="GO" id="GO:0005737">
    <property type="term" value="C:cytoplasm"/>
    <property type="evidence" value="ECO:0007669"/>
    <property type="project" value="UniProtKB-SubCell"/>
</dbReference>
<dbReference type="GO" id="GO:0036370">
    <property type="term" value="F:D-alanyl carrier activity"/>
    <property type="evidence" value="ECO:0007669"/>
    <property type="project" value="UniProtKB-UniRule"/>
</dbReference>
<dbReference type="GO" id="GO:0071555">
    <property type="term" value="P:cell wall organization"/>
    <property type="evidence" value="ECO:0007669"/>
    <property type="project" value="UniProtKB-KW"/>
</dbReference>
<dbReference type="GO" id="GO:0070395">
    <property type="term" value="P:lipoteichoic acid biosynthetic process"/>
    <property type="evidence" value="ECO:0007669"/>
    <property type="project" value="UniProtKB-UniRule"/>
</dbReference>
<dbReference type="Gene3D" id="1.10.1200.10">
    <property type="entry name" value="ACP-like"/>
    <property type="match status" value="1"/>
</dbReference>
<dbReference type="HAMAP" id="MF_00565">
    <property type="entry name" value="DltC"/>
    <property type="match status" value="1"/>
</dbReference>
<dbReference type="InterPro" id="IPR036736">
    <property type="entry name" value="ACP-like_sf"/>
</dbReference>
<dbReference type="InterPro" id="IPR003230">
    <property type="entry name" value="DltC"/>
</dbReference>
<dbReference type="InterPro" id="IPR009081">
    <property type="entry name" value="PP-bd_ACP"/>
</dbReference>
<dbReference type="NCBIfam" id="TIGR01688">
    <property type="entry name" value="dltC"/>
    <property type="match status" value="1"/>
</dbReference>
<dbReference type="NCBIfam" id="NF003464">
    <property type="entry name" value="PRK05087.1"/>
    <property type="match status" value="1"/>
</dbReference>
<dbReference type="Pfam" id="PF00550">
    <property type="entry name" value="PP-binding"/>
    <property type="match status" value="1"/>
</dbReference>
<dbReference type="SUPFAM" id="SSF47336">
    <property type="entry name" value="ACP-like"/>
    <property type="match status" value="1"/>
</dbReference>
<dbReference type="PROSITE" id="PS50075">
    <property type="entry name" value="CARRIER"/>
    <property type="match status" value="1"/>
</dbReference>
<reference key="1">
    <citation type="journal article" date="2007" name="BMC Microbiol.">
        <title>Subtle genetic changes enhance virulence of methicillin resistant and sensitive Staphylococcus aureus.</title>
        <authorList>
            <person name="Highlander S.K."/>
            <person name="Hulten K.G."/>
            <person name="Qin X."/>
            <person name="Jiang H."/>
            <person name="Yerrapragada S."/>
            <person name="Mason E.O. Jr."/>
            <person name="Shang Y."/>
            <person name="Williams T.M."/>
            <person name="Fortunov R.M."/>
            <person name="Liu Y."/>
            <person name="Igboeli O."/>
            <person name="Petrosino J."/>
            <person name="Tirumalai M."/>
            <person name="Uzman A."/>
            <person name="Fox G.E."/>
            <person name="Cardenas A.M."/>
            <person name="Muzny D.M."/>
            <person name="Hemphill L."/>
            <person name="Ding Y."/>
            <person name="Dugan S."/>
            <person name="Blyth P.R."/>
            <person name="Buhay C.J."/>
            <person name="Dinh H.H."/>
            <person name="Hawes A.C."/>
            <person name="Holder M."/>
            <person name="Kovar C.L."/>
            <person name="Lee S.L."/>
            <person name="Liu W."/>
            <person name="Nazareth L.V."/>
            <person name="Wang Q."/>
            <person name="Zhou J."/>
            <person name="Kaplan S.L."/>
            <person name="Weinstock G.M."/>
        </authorList>
    </citation>
    <scope>NUCLEOTIDE SEQUENCE [LARGE SCALE GENOMIC DNA]</scope>
    <source>
        <strain>USA300 / TCH1516</strain>
    </source>
</reference>